<sequence length="666" mass="74049">MACPTRRGRQQPGFACEECRRRKARCDRVRPKCGFCTENELQCVFVDKRQQRGPIKGQITSMQSQLATLRWQLDRYLRHRPPPSITMAGELDEPPADIQTMLDDFDVQVAALKQDATATTTMSTSTALMPAPAISSKDAAPAGAGLSWPDPTWLDRQWQDVSSTSLVPPSDLTVSSATTLTDPLSFDLLNETPPPPSTTTTTSTTRRDSCTKVMLTDLIRAELDQLYFDRVHAFCPIIHRRRYFARVARDSHTPAQACLQFAMRTLAAAMSAHCHLSEHLYAETKALLETHSQTPATPRDKVPLEHIQAWLLLSHYELLRIGVHQAMLTAGRAFRLVQMARLSELDAGSDRQLSPPSSSPPSSLTLSPSGENAENFVDAEEGRRTFWLAYCFDRLLCLQNEWPLTLQEEMILTRLPSLEHNYQNNLPARTPFLTEAMAQTGQSTMSPFAECIIMATLHGRCMTHRRFYANSNSTASGSEFESGAATRDFCIRQNWLSNAVDRRVQMLQQVSSPAVDSDPMLLFTQTLGYRATMHLSDTVQQVSWRALASSPVDQQLLSPGATMSLSAAAYHQMASHAAGEIVRLAKAVPSLSPFKAHPFLPDTLACAATFLSTGSPDPTGGEGVQHLLRVLSELRDTHSLARDYLQGLSVQTQDEDHRQDTRWYCT</sequence>
<accession>Q5BEK1</accession>
<accession>C8VTY4</accession>
<comment type="function">
    <text evidence="3">Transcription factor that regulates the expression of the gene cluster that mediates the biosynthesis of asperfuranone, a probable antitumor agent (PubMed:19199437).</text>
</comment>
<comment type="subcellular location">
    <subcellularLocation>
        <location evidence="7">Nucleus</location>
    </subcellularLocation>
</comment>
<comment type="induction">
    <text evidence="5">Expression is positively regulated by the secondary metabolism cross-pathway regulator scpR (PubMed:20952652).</text>
</comment>
<comment type="disruption phenotype">
    <text evidence="3">Leads to decreased production of asperfuranone (PubMed:19199437).</text>
</comment>
<comment type="biotechnology">
    <text evidence="4">Asperfuranone provides anti-proliferative activity in human non-small cell lung cancer cells (PubMed:20148857).</text>
</comment>
<name>AFOA_EMENI</name>
<feature type="chain" id="PRO_0000436369" description="Asperfuranone cluster transcription factor afoA">
    <location>
        <begin position="1"/>
        <end position="666"/>
    </location>
</feature>
<feature type="DNA-binding region" description="Zn(2)-C6 fungal-type" evidence="1">
    <location>
        <begin position="16"/>
        <end position="43"/>
    </location>
</feature>
<feature type="region of interest" description="Disordered" evidence="2">
    <location>
        <begin position="184"/>
        <end position="206"/>
    </location>
</feature>
<feature type="region of interest" description="Disordered" evidence="2">
    <location>
        <begin position="347"/>
        <end position="373"/>
    </location>
</feature>
<feature type="compositionally biased region" description="Low complexity" evidence="2">
    <location>
        <begin position="353"/>
        <end position="369"/>
    </location>
</feature>
<keyword id="KW-0238">DNA-binding</keyword>
<keyword id="KW-0479">Metal-binding</keyword>
<keyword id="KW-0539">Nucleus</keyword>
<keyword id="KW-1185">Reference proteome</keyword>
<keyword id="KW-0804">Transcription</keyword>
<keyword id="KW-0805">Transcription regulation</keyword>
<keyword id="KW-0862">Zinc</keyword>
<protein>
    <recommendedName>
        <fullName evidence="6">Asperfuranone cluster transcription factor afoA</fullName>
    </recommendedName>
    <alternativeName>
        <fullName evidence="6">Asperfuranone biosynthesis protein A</fullName>
    </alternativeName>
</protein>
<gene>
    <name evidence="6" type="primary">afoA</name>
    <name type="ORF">AN1029</name>
</gene>
<reference key="1">
    <citation type="journal article" date="2005" name="Nature">
        <title>Sequencing of Aspergillus nidulans and comparative analysis with A. fumigatus and A. oryzae.</title>
        <authorList>
            <person name="Galagan J.E."/>
            <person name="Calvo S.E."/>
            <person name="Cuomo C."/>
            <person name="Ma L.-J."/>
            <person name="Wortman J.R."/>
            <person name="Batzoglou S."/>
            <person name="Lee S.-I."/>
            <person name="Bastuerkmen M."/>
            <person name="Spevak C.C."/>
            <person name="Clutterbuck J."/>
            <person name="Kapitonov V."/>
            <person name="Jurka J."/>
            <person name="Scazzocchio C."/>
            <person name="Farman M.L."/>
            <person name="Butler J."/>
            <person name="Purcell S."/>
            <person name="Harris S."/>
            <person name="Braus G.H."/>
            <person name="Draht O."/>
            <person name="Busch S."/>
            <person name="D'Enfert C."/>
            <person name="Bouchier C."/>
            <person name="Goldman G.H."/>
            <person name="Bell-Pedersen D."/>
            <person name="Griffiths-Jones S."/>
            <person name="Doonan J.H."/>
            <person name="Yu J."/>
            <person name="Vienken K."/>
            <person name="Pain A."/>
            <person name="Freitag M."/>
            <person name="Selker E.U."/>
            <person name="Archer D.B."/>
            <person name="Penalva M.A."/>
            <person name="Oakley B.R."/>
            <person name="Momany M."/>
            <person name="Tanaka T."/>
            <person name="Kumagai T."/>
            <person name="Asai K."/>
            <person name="Machida M."/>
            <person name="Nierman W.C."/>
            <person name="Denning D.W."/>
            <person name="Caddick M.X."/>
            <person name="Hynes M."/>
            <person name="Paoletti M."/>
            <person name="Fischer R."/>
            <person name="Miller B.L."/>
            <person name="Dyer P.S."/>
            <person name="Sachs M.S."/>
            <person name="Osmani S.A."/>
            <person name="Birren B.W."/>
        </authorList>
    </citation>
    <scope>NUCLEOTIDE SEQUENCE [LARGE SCALE GENOMIC DNA]</scope>
    <source>
        <strain>FGSC A4 / ATCC 38163 / CBS 112.46 / NRRL 194 / M139</strain>
    </source>
</reference>
<reference key="2">
    <citation type="journal article" date="2009" name="Fungal Genet. Biol.">
        <title>The 2008 update of the Aspergillus nidulans genome annotation: a community effort.</title>
        <authorList>
            <person name="Wortman J.R."/>
            <person name="Gilsenan J.M."/>
            <person name="Joardar V."/>
            <person name="Deegan J."/>
            <person name="Clutterbuck J."/>
            <person name="Andersen M.R."/>
            <person name="Archer D."/>
            <person name="Bencina M."/>
            <person name="Braus G."/>
            <person name="Coutinho P."/>
            <person name="von Dohren H."/>
            <person name="Doonan J."/>
            <person name="Driessen A.J."/>
            <person name="Durek P."/>
            <person name="Espeso E."/>
            <person name="Fekete E."/>
            <person name="Flipphi M."/>
            <person name="Estrada C.G."/>
            <person name="Geysens S."/>
            <person name="Goldman G."/>
            <person name="de Groot P.W."/>
            <person name="Hansen K."/>
            <person name="Harris S.D."/>
            <person name="Heinekamp T."/>
            <person name="Helmstaedt K."/>
            <person name="Henrissat B."/>
            <person name="Hofmann G."/>
            <person name="Homan T."/>
            <person name="Horio T."/>
            <person name="Horiuchi H."/>
            <person name="James S."/>
            <person name="Jones M."/>
            <person name="Karaffa L."/>
            <person name="Karanyi Z."/>
            <person name="Kato M."/>
            <person name="Keller N."/>
            <person name="Kelly D.E."/>
            <person name="Kiel J.A."/>
            <person name="Kim J.M."/>
            <person name="van der Klei I.J."/>
            <person name="Klis F.M."/>
            <person name="Kovalchuk A."/>
            <person name="Krasevec N."/>
            <person name="Kubicek C.P."/>
            <person name="Liu B."/>
            <person name="Maccabe A."/>
            <person name="Meyer V."/>
            <person name="Mirabito P."/>
            <person name="Miskei M."/>
            <person name="Mos M."/>
            <person name="Mullins J."/>
            <person name="Nelson D.R."/>
            <person name="Nielsen J."/>
            <person name="Oakley B.R."/>
            <person name="Osmani S.A."/>
            <person name="Pakula T."/>
            <person name="Paszewski A."/>
            <person name="Paulsen I."/>
            <person name="Pilsyk S."/>
            <person name="Pocsi I."/>
            <person name="Punt P.J."/>
            <person name="Ram A.F."/>
            <person name="Ren Q."/>
            <person name="Robellet X."/>
            <person name="Robson G."/>
            <person name="Seiboth B."/>
            <person name="van Solingen P."/>
            <person name="Specht T."/>
            <person name="Sun J."/>
            <person name="Taheri-Talesh N."/>
            <person name="Takeshita N."/>
            <person name="Ussery D."/>
            <person name="vanKuyk P.A."/>
            <person name="Visser H."/>
            <person name="van de Vondervoort P.J."/>
            <person name="de Vries R.P."/>
            <person name="Walton J."/>
            <person name="Xiang X."/>
            <person name="Xiong Y."/>
            <person name="Zeng A.P."/>
            <person name="Brandt B.W."/>
            <person name="Cornell M.J."/>
            <person name="van den Hondel C.A."/>
            <person name="Visser J."/>
            <person name="Oliver S.G."/>
            <person name="Turner G."/>
        </authorList>
    </citation>
    <scope>GENOME REANNOTATION</scope>
    <source>
        <strain>FGSC A4 / ATCC 38163 / CBS 112.46 / NRRL 194 / M139</strain>
    </source>
</reference>
<reference key="3">
    <citation type="journal article" date="2009" name="J. Am. Chem. Soc.">
        <title>A gene cluster containing two fungal polyketide synthases encodes the biosynthetic pathway for a polyketide, asperfuranone, in Aspergillus nidulans.</title>
        <authorList>
            <person name="Chiang Y.M."/>
            <person name="Szewczyk E."/>
            <person name="Davidson A.D."/>
            <person name="Keller N."/>
            <person name="Oakley B.R."/>
            <person name="Wang C.C."/>
        </authorList>
    </citation>
    <scope>FUNCTION</scope>
    <scope>DISRUPTION PHENOTYPE</scope>
</reference>
<reference key="4">
    <citation type="journal article" date="2010" name="Appl. Environ. Microbiol.">
        <title>Activation of a silent fungal polyketide biosynthesis pathway through regulatory cross talk with a cryptic nonribosomal peptide synthetase gene cluster.</title>
        <authorList>
            <person name="Bergmann S."/>
            <person name="Funk A.N."/>
            <person name="Scherlach K."/>
            <person name="Schroeckh V."/>
            <person name="Shelest E."/>
            <person name="Horn U."/>
            <person name="Hertweck C."/>
            <person name="Brakhage A.A."/>
        </authorList>
    </citation>
    <scope>INDUCTION</scope>
</reference>
<reference key="5">
    <citation type="journal article" date="2010" name="Basic Clin. Pharmacol. Toxicol.">
        <title>Asperfuranone from Aspergillus nidulans inhibits proliferation of human non-small cell lung cancer A549 cells via blocking cell cycle progression and inducing apoptosis.</title>
        <authorList>
            <person name="Wang C.C."/>
            <person name="Chiang Y.M."/>
            <person name="Praseuth M.B."/>
            <person name="Kuo P.L."/>
            <person name="Liang H.L."/>
            <person name="Hsu Y.L."/>
        </authorList>
    </citation>
    <scope>BIOTECHNOLOGY</scope>
</reference>
<organism>
    <name type="scientific">Emericella nidulans (strain FGSC A4 / ATCC 38163 / CBS 112.46 / NRRL 194 / M139)</name>
    <name type="common">Aspergillus nidulans</name>
    <dbReference type="NCBI Taxonomy" id="227321"/>
    <lineage>
        <taxon>Eukaryota</taxon>
        <taxon>Fungi</taxon>
        <taxon>Dikarya</taxon>
        <taxon>Ascomycota</taxon>
        <taxon>Pezizomycotina</taxon>
        <taxon>Eurotiomycetes</taxon>
        <taxon>Eurotiomycetidae</taxon>
        <taxon>Eurotiales</taxon>
        <taxon>Aspergillaceae</taxon>
        <taxon>Aspergillus</taxon>
        <taxon>Aspergillus subgen. Nidulantes</taxon>
    </lineage>
</organism>
<evidence type="ECO:0000255" key="1">
    <source>
        <dbReference type="PROSITE-ProRule" id="PRU00227"/>
    </source>
</evidence>
<evidence type="ECO:0000256" key="2">
    <source>
        <dbReference type="SAM" id="MobiDB-lite"/>
    </source>
</evidence>
<evidence type="ECO:0000269" key="3">
    <source>
    </source>
</evidence>
<evidence type="ECO:0000269" key="4">
    <source>
    </source>
</evidence>
<evidence type="ECO:0000269" key="5">
    <source>
    </source>
</evidence>
<evidence type="ECO:0000303" key="6">
    <source>
    </source>
</evidence>
<evidence type="ECO:0000305" key="7"/>
<proteinExistence type="evidence at protein level"/>
<dbReference type="EMBL" id="BN001308">
    <property type="protein sequence ID" value="CBF88304.1"/>
    <property type="molecule type" value="Genomic_DNA"/>
</dbReference>
<dbReference type="EMBL" id="AACD01000015">
    <property type="protein sequence ID" value="EAA65597.1"/>
    <property type="molecule type" value="Genomic_DNA"/>
</dbReference>
<dbReference type="RefSeq" id="XP_658633.1">
    <property type="nucleotide sequence ID" value="XM_653541.1"/>
</dbReference>
<dbReference type="SMR" id="Q5BEK1"/>
<dbReference type="STRING" id="227321.Q5BEK1"/>
<dbReference type="EnsemblFungi" id="CBF88304">
    <property type="protein sequence ID" value="CBF88304"/>
    <property type="gene ID" value="ANIA_01029"/>
</dbReference>
<dbReference type="KEGG" id="ani:ANIA_01029"/>
<dbReference type="eggNOG" id="ENOG502SH49">
    <property type="taxonomic scope" value="Eukaryota"/>
</dbReference>
<dbReference type="HOGENOM" id="CLU_011017_3_1_1"/>
<dbReference type="InParanoid" id="Q5BEK1"/>
<dbReference type="OMA" id="CPIIHRR"/>
<dbReference type="OrthoDB" id="3037908at2759"/>
<dbReference type="Proteomes" id="UP000000560">
    <property type="component" value="Chromosome VIII"/>
</dbReference>
<dbReference type="GO" id="GO:0005634">
    <property type="term" value="C:nucleus"/>
    <property type="evidence" value="ECO:0007669"/>
    <property type="project" value="UniProtKB-SubCell"/>
</dbReference>
<dbReference type="GO" id="GO:0000981">
    <property type="term" value="F:DNA-binding transcription factor activity, RNA polymerase II-specific"/>
    <property type="evidence" value="ECO:0000318"/>
    <property type="project" value="GO_Central"/>
</dbReference>
<dbReference type="GO" id="GO:0043565">
    <property type="term" value="F:sequence-specific DNA binding"/>
    <property type="evidence" value="ECO:0000318"/>
    <property type="project" value="GO_Central"/>
</dbReference>
<dbReference type="GO" id="GO:0008270">
    <property type="term" value="F:zinc ion binding"/>
    <property type="evidence" value="ECO:0007669"/>
    <property type="project" value="InterPro"/>
</dbReference>
<dbReference type="GO" id="GO:0006351">
    <property type="term" value="P:DNA-templated transcription"/>
    <property type="evidence" value="ECO:0007669"/>
    <property type="project" value="InterPro"/>
</dbReference>
<dbReference type="GO" id="GO:0045944">
    <property type="term" value="P:positive regulation of transcription by RNA polymerase II"/>
    <property type="evidence" value="ECO:0000318"/>
    <property type="project" value="GO_Central"/>
</dbReference>
<dbReference type="CDD" id="cd12148">
    <property type="entry name" value="fungal_TF_MHR"/>
    <property type="match status" value="1"/>
</dbReference>
<dbReference type="CDD" id="cd00067">
    <property type="entry name" value="GAL4"/>
    <property type="match status" value="1"/>
</dbReference>
<dbReference type="Gene3D" id="4.10.240.10">
    <property type="entry name" value="Zn(2)-C6 fungal-type DNA-binding domain"/>
    <property type="match status" value="1"/>
</dbReference>
<dbReference type="InterPro" id="IPR050815">
    <property type="entry name" value="TF_fung"/>
</dbReference>
<dbReference type="InterPro" id="IPR007219">
    <property type="entry name" value="Transcription_factor_dom_fun"/>
</dbReference>
<dbReference type="InterPro" id="IPR036864">
    <property type="entry name" value="Zn2-C6_fun-type_DNA-bd_sf"/>
</dbReference>
<dbReference type="InterPro" id="IPR001138">
    <property type="entry name" value="Zn2Cys6_DnaBD"/>
</dbReference>
<dbReference type="PANTHER" id="PTHR47338:SF3">
    <property type="entry name" value="C6 FINGER DOMAIN TRANSCRIPTION FACTOR DBAA-RELATED"/>
    <property type="match status" value="1"/>
</dbReference>
<dbReference type="PANTHER" id="PTHR47338">
    <property type="entry name" value="ZN(II)2CYS6 TRANSCRIPTION FACTOR (EUROFUNG)-RELATED"/>
    <property type="match status" value="1"/>
</dbReference>
<dbReference type="Pfam" id="PF04082">
    <property type="entry name" value="Fungal_trans"/>
    <property type="match status" value="1"/>
</dbReference>
<dbReference type="Pfam" id="PF00172">
    <property type="entry name" value="Zn_clus"/>
    <property type="match status" value="1"/>
</dbReference>
<dbReference type="SMART" id="SM00906">
    <property type="entry name" value="Fungal_trans"/>
    <property type="match status" value="1"/>
</dbReference>
<dbReference type="SMART" id="SM00066">
    <property type="entry name" value="GAL4"/>
    <property type="match status" value="1"/>
</dbReference>
<dbReference type="SUPFAM" id="SSF57701">
    <property type="entry name" value="Zn2/Cys6 DNA-binding domain"/>
    <property type="match status" value="1"/>
</dbReference>
<dbReference type="PROSITE" id="PS00463">
    <property type="entry name" value="ZN2_CY6_FUNGAL_1"/>
    <property type="match status" value="1"/>
</dbReference>
<dbReference type="PROSITE" id="PS50048">
    <property type="entry name" value="ZN2_CY6_FUNGAL_2"/>
    <property type="match status" value="1"/>
</dbReference>